<dbReference type="EC" id="2.4.1.327" evidence="1"/>
<dbReference type="EMBL" id="AF257324">
    <property type="protein sequence ID" value="AAF70102.1"/>
    <property type="molecule type" value="Genomic_DNA"/>
</dbReference>
<dbReference type="SMR" id="Q9L555"/>
<dbReference type="CAZy" id="GT1">
    <property type="family name" value="Glycosyltransferase Family 1"/>
</dbReference>
<dbReference type="KEGG" id="ag:AAF70102"/>
<dbReference type="BioCyc" id="MetaCyc:MONOMER-18193"/>
<dbReference type="BRENDA" id="2.4.1.B46">
    <property type="organism ID" value="13206"/>
</dbReference>
<dbReference type="SABIO-RK" id="Q9L555"/>
<dbReference type="GO" id="GO:0016758">
    <property type="term" value="F:hexosyltransferase activity"/>
    <property type="evidence" value="ECO:0007669"/>
    <property type="project" value="UniProtKB-ARBA"/>
</dbReference>
<dbReference type="GO" id="GO:0008194">
    <property type="term" value="F:UDP-glycosyltransferase activity"/>
    <property type="evidence" value="ECO:0007669"/>
    <property type="project" value="InterPro"/>
</dbReference>
<dbReference type="GO" id="GO:0017000">
    <property type="term" value="P:antibiotic biosynthetic process"/>
    <property type="evidence" value="ECO:0007669"/>
    <property type="project" value="UniProtKB-KW"/>
</dbReference>
<dbReference type="CDD" id="cd03784">
    <property type="entry name" value="GT1_Gtf-like"/>
    <property type="match status" value="1"/>
</dbReference>
<dbReference type="FunFam" id="3.40.50.2000:FF:000072">
    <property type="entry name" value="Glycosyl transferase"/>
    <property type="match status" value="1"/>
</dbReference>
<dbReference type="Gene3D" id="3.40.50.2000">
    <property type="entry name" value="Glycogen Phosphorylase B"/>
    <property type="match status" value="2"/>
</dbReference>
<dbReference type="InterPro" id="IPR010610">
    <property type="entry name" value="EryCIII-like_C"/>
</dbReference>
<dbReference type="InterPro" id="IPR048284">
    <property type="entry name" value="EryCIII-like_N"/>
</dbReference>
<dbReference type="InterPro" id="IPR030953">
    <property type="entry name" value="Glycosyl_450act"/>
</dbReference>
<dbReference type="InterPro" id="IPR050426">
    <property type="entry name" value="Glycosyltransferase_28"/>
</dbReference>
<dbReference type="InterPro" id="IPR002213">
    <property type="entry name" value="UDP_glucos_trans"/>
</dbReference>
<dbReference type="NCBIfam" id="TIGR04516">
    <property type="entry name" value="glycosyl_450act"/>
    <property type="match status" value="1"/>
</dbReference>
<dbReference type="PANTHER" id="PTHR48050">
    <property type="entry name" value="STEROL 3-BETA-GLUCOSYLTRANSFERASE"/>
    <property type="match status" value="1"/>
</dbReference>
<dbReference type="PANTHER" id="PTHR48050:SF13">
    <property type="entry name" value="STEROL 3-BETA-GLUCOSYLTRANSFERASE UGT80A2"/>
    <property type="match status" value="1"/>
</dbReference>
<dbReference type="Pfam" id="PF06722">
    <property type="entry name" value="EryCIII-like_C"/>
    <property type="match status" value="1"/>
</dbReference>
<dbReference type="Pfam" id="PF21036">
    <property type="entry name" value="EryCIII-like_N"/>
    <property type="match status" value="1"/>
</dbReference>
<dbReference type="SUPFAM" id="SSF53756">
    <property type="entry name" value="UDP-Glycosyltransferase/glycogen phosphorylase"/>
    <property type="match status" value="1"/>
</dbReference>
<comment type="function">
    <text evidence="1">Involved in the biosynthesis of the trisaccharide moiety characteristic of the antitumor drug aclacinomycins. In the first reaction, AknK catalyzes the transfer of 2-deoxy-beta-L-fucose from the activated donor dTDP-2-deoxy-beta-L-fucose to the mono-glycosylated aclacinomycin T (rhodosaminyl aklavinone), forming the di-glycosylated aclacinomycin S (L-2-deoxyfucosyl-L-rhodosaminyl aklavinone). It can also catalyze the addition of an alternate dTDP-L-sugar, dTDP-L-daunosamine, to aclacinomycin T and the addition of 2-deoxy-beta-L-fucose to the mono-glycosylated aglycones (monoglycosylated anthracyclines) such as daunomycin (daunorubicin), adriamycin (doxorubicin) and idarubicin. In vitro, AknK also catalyzes the addition of a second L-2-deoxyfucosyl moiety from dTDP-2-deoxy-beta-L-fucose, albeit with reduced activity, to the natural disaccharide chain of aclacinomycin S to produce L-deoxyfucosyl-L-deoxyfucosyl-L-rhodosaminyl aklavinone (2-deoxy-alpha-D-fucosyl-aclacinomycin S), a variant of the natural aclacinomycin A.</text>
</comment>
<comment type="catalytic activity">
    <reaction evidence="1">
        <text>dTDP-2-deoxy-beta-L-fucose + aclacinomycin T = aclacinomycin S + dTDP + H(+)</text>
        <dbReference type="Rhea" id="RHEA:41568"/>
        <dbReference type="ChEBI" id="CHEBI:15378"/>
        <dbReference type="ChEBI" id="CHEBI:58369"/>
        <dbReference type="ChEBI" id="CHEBI:77979"/>
        <dbReference type="ChEBI" id="CHEBI:78302"/>
        <dbReference type="ChEBI" id="CHEBI:78303"/>
        <dbReference type="EC" id="2.4.1.327"/>
    </reaction>
</comment>
<comment type="biophysicochemical properties">
    <kinetics>
        <KM evidence="1">104.4 uM for rhodosaminyl aklavinone (with TDP-L-daunosamine as sugar donor)</KM>
        <KM evidence="1">109.1 uM for rhodosaminyl aklavinone (with TDP-L-2-deoxyfucose as sugar donor)</KM>
        <KM evidence="1">138 uM for idarubicin (with TDP-L-2-deoxyfucose as sugar donor)</KM>
        <KM evidence="1">148.9 uM for TDP-L-2-deoxyfucose (with rhodosaminyl aklavinone as sugar acceptor)</KM>
        <KM evidence="1">531 uM for TDP-L-2-deoxyfucose (with idarubicin as sugar acceptor)</KM>
        <KM evidence="1">940 uM for TDP-L-daunosamine (with rhodosaminyl aklavinone as sugar acceptor)</KM>
        <text evidence="1">kcat is 2.1 sec(-1) for transferase activity with rhodosaminyl aklavinone as sugar acceptor and TDP-L-daunosamine as sugar donor. kcat is 5.4 sec(-1) for transferase activity with idarubicin as sugar acceptor and TDP-L-2-deoxyfucose as sugar donor. kcat is 65.4 sec(-1) for transferase activity with rhodosaminyl aklavinone as sugar acceptor and TDP-L-2-deoxyfucose as sugar donor.</text>
    </kinetics>
</comment>
<comment type="mass spectrometry" mass="50699.0" method="MALDI" evidence="1"/>
<comment type="similarity">
    <text evidence="3">Belongs to the glycosyltransferase 28 family.</text>
</comment>
<evidence type="ECO:0000269" key="1">
    <source>
    </source>
</evidence>
<evidence type="ECO:0000303" key="2">
    <source>
    </source>
</evidence>
<evidence type="ECO:0000305" key="3"/>
<reference key="1">
    <citation type="journal article" date="2002" name="Gene">
        <title>Cloning and characterization of Streptomyces galilaeus aclacinomycins polyketide synthase (PKS) cluster.</title>
        <authorList>
            <person name="Raty K."/>
            <person name="Kantola J."/>
            <person name="Hautala A."/>
            <person name="Hakala J."/>
            <person name="Ylihonko K."/>
            <person name="Mantsala P."/>
        </authorList>
    </citation>
    <scope>NUCLEOTIDE SEQUENCE [GENOMIC DNA]</scope>
    <source>
        <strain>ATCC31615</strain>
    </source>
</reference>
<reference key="2">
    <citation type="submission" date="2006-08" db="EMBL/GenBank/DDBJ databases">
        <authorList>
            <person name="Niemi J."/>
        </authorList>
    </citation>
    <scope>NUCLEOTIDE SEQUENCE [GENOMIC DNA]</scope>
    <source>
        <strain>ATCC31615</strain>
    </source>
</reference>
<reference key="3">
    <citation type="journal article" date="2004" name="Biochemistry">
        <title>AknK is an L-2-deoxyfucosyltransferase in the biosynthesis of the anthracycline aclacinomycin A.</title>
        <authorList>
            <person name="Lu W."/>
            <person name="Leimkuhler C."/>
            <person name="Oberthuer M."/>
            <person name="Kahne D."/>
            <person name="Walsh C.T."/>
        </authorList>
    </citation>
    <scope>PROTEIN SEQUENCE OF N-TERMINUS</scope>
    <scope>FUNCTION</scope>
    <scope>CATALYTIC ACTIVITY</scope>
    <scope>BIOPHYSICOCHEMICAL PROPERTIES</scope>
    <scope>MASS SPECTROMETRY</scope>
    <scope>SUBSTRATE SPECIFICITY</scope>
    <source>
        <strain>ATCC31615</strain>
    </source>
</reference>
<protein>
    <recommendedName>
        <fullName evidence="2">Aclacinomycin-T 2-deoxy-L-fucose transferase</fullName>
        <shortName evidence="2">AknK</shortName>
        <ecNumber evidence="1">2.4.1.327</ecNumber>
    </recommendedName>
    <alternativeName>
        <fullName evidence="2">L-2-deoxyfucosyltransferase</fullName>
    </alternativeName>
</protein>
<name>AKNK_STRGJ</name>
<organism>
    <name type="scientific">Streptomyces galilaeus</name>
    <dbReference type="NCBI Taxonomy" id="33899"/>
    <lineage>
        <taxon>Bacteria</taxon>
        <taxon>Bacillati</taxon>
        <taxon>Actinomycetota</taxon>
        <taxon>Actinomycetes</taxon>
        <taxon>Kitasatosporales</taxon>
        <taxon>Streptomycetaceae</taxon>
        <taxon>Streptomyces</taxon>
    </lineage>
</organism>
<gene>
    <name evidence="2" type="primary">aknK</name>
</gene>
<sequence length="440" mass="49164">MKVLFTTFAAKSHMHAQVPLAWALQTAGHEVRIASQPDLAEDITRTGLTAVCVGEPLLLEEQMQRVNEGLGDDAEIMESQAEAGMDMTETRPEMLTWDHVLGVFTSMTAMAFQNSCPERMIDDVVAFAREWQPDLIVWDTLSFAGPVAAQVTGAAHARLLFGLDLLGRMRETFLDLQEERLPEQRDDPLREWLTWTLGRYGAEFEEEVAVGQWTVDPVPPSMRFPVKQPFVPLRYIPYNGQAVIPDWLHEPPKKRRVCLTLGVAHREVLDGDRASIGELVEALAELDVEVVATLNEKQLAGMELPDNVRAVDFVPLNALLPTCSAVIHHGGSGTFQTALAHGVPQLIVPDMVWDTIHKAKQLERFGAGLYLHDVDNYTAQDLRDHLLRLLEEPSFAENCARIRREMVGTPSPNDIVPLLEKLTAEHRRDRGARGTVRGEQ</sequence>
<keyword id="KW-0045">Antibiotic biosynthesis</keyword>
<keyword id="KW-0903">Direct protein sequencing</keyword>
<keyword id="KW-0328">Glycosyltransferase</keyword>
<keyword id="KW-0808">Transferase</keyword>
<feature type="chain" id="PRO_0000430675" description="Aclacinomycin-T 2-deoxy-L-fucose transferase">
    <location>
        <begin position="1"/>
        <end position="440"/>
    </location>
</feature>
<accession>Q9L555</accession>
<proteinExistence type="evidence at protein level"/>